<sequence length="400" mass="44362">MSKEKIAIAYSGGLDTSIMIKWLKDKYDAEIVAVTGNLGQQKEIENLESKAIATGASKFQFLDLRKEFVEEYIWRALKAGALYEDVYPLATALGRPLLAKAIVDTALAEGCTMLAHGCTGKGNDQVRFEVTFASLAPHLKVLAPLREWEFTSRESEIAYALEHNIQVSATKKNPYSIDENIWGISIECGVLEDPMVAPPEDAYQITTSPENAPNTPAVVEIEFEKGIPVSLDGKKMSGLDLIIRLNEIGAANGVGRLDMIENRVVGIKSREIYEAPAATILHFAHRELERLTLEKSVFQYKKNISQDYANIIYNGLWFSPMRKALDAFVDETQNPVTGLVRLKLYKGGVSLLGRNSPYSLYNEELATYTESDTFNHKAAAGFIHLYGLGLKTYSEVHTAK</sequence>
<accession>B4S9U5</accession>
<name>ASSY_PELPB</name>
<feature type="chain" id="PRO_1000089047" description="Argininosuccinate synthase">
    <location>
        <begin position="1"/>
        <end position="400"/>
    </location>
</feature>
<feature type="binding site" evidence="1">
    <location>
        <begin position="9"/>
        <end position="17"/>
    </location>
    <ligand>
        <name>ATP</name>
        <dbReference type="ChEBI" id="CHEBI:30616"/>
    </ligand>
</feature>
<feature type="binding site" evidence="1">
    <location>
        <position position="87"/>
    </location>
    <ligand>
        <name>L-citrulline</name>
        <dbReference type="ChEBI" id="CHEBI:57743"/>
    </ligand>
</feature>
<feature type="binding site" evidence="1">
    <location>
        <position position="117"/>
    </location>
    <ligand>
        <name>ATP</name>
        <dbReference type="ChEBI" id="CHEBI:30616"/>
    </ligand>
</feature>
<feature type="binding site" evidence="1">
    <location>
        <position position="119"/>
    </location>
    <ligand>
        <name>L-aspartate</name>
        <dbReference type="ChEBI" id="CHEBI:29991"/>
    </ligand>
</feature>
<feature type="binding site" evidence="1">
    <location>
        <position position="123"/>
    </location>
    <ligand>
        <name>L-aspartate</name>
        <dbReference type="ChEBI" id="CHEBI:29991"/>
    </ligand>
</feature>
<feature type="binding site" evidence="1">
    <location>
        <position position="123"/>
    </location>
    <ligand>
        <name>L-citrulline</name>
        <dbReference type="ChEBI" id="CHEBI:57743"/>
    </ligand>
</feature>
<feature type="binding site" evidence="1">
    <location>
        <position position="124"/>
    </location>
    <ligand>
        <name>L-aspartate</name>
        <dbReference type="ChEBI" id="CHEBI:29991"/>
    </ligand>
</feature>
<feature type="binding site" evidence="1">
    <location>
        <position position="127"/>
    </location>
    <ligand>
        <name>L-citrulline</name>
        <dbReference type="ChEBI" id="CHEBI:57743"/>
    </ligand>
</feature>
<feature type="binding site" evidence="1">
    <location>
        <position position="176"/>
    </location>
    <ligand>
        <name>L-citrulline</name>
        <dbReference type="ChEBI" id="CHEBI:57743"/>
    </ligand>
</feature>
<feature type="binding site" evidence="1">
    <location>
        <position position="185"/>
    </location>
    <ligand>
        <name>L-citrulline</name>
        <dbReference type="ChEBI" id="CHEBI:57743"/>
    </ligand>
</feature>
<feature type="binding site" evidence="1">
    <location>
        <position position="261"/>
    </location>
    <ligand>
        <name>L-citrulline</name>
        <dbReference type="ChEBI" id="CHEBI:57743"/>
    </ligand>
</feature>
<feature type="binding site" evidence="1">
    <location>
        <position position="273"/>
    </location>
    <ligand>
        <name>L-citrulline</name>
        <dbReference type="ChEBI" id="CHEBI:57743"/>
    </ligand>
</feature>
<comment type="catalytic activity">
    <reaction evidence="1">
        <text>L-citrulline + L-aspartate + ATP = 2-(N(omega)-L-arginino)succinate + AMP + diphosphate + H(+)</text>
        <dbReference type="Rhea" id="RHEA:10932"/>
        <dbReference type="ChEBI" id="CHEBI:15378"/>
        <dbReference type="ChEBI" id="CHEBI:29991"/>
        <dbReference type="ChEBI" id="CHEBI:30616"/>
        <dbReference type="ChEBI" id="CHEBI:33019"/>
        <dbReference type="ChEBI" id="CHEBI:57472"/>
        <dbReference type="ChEBI" id="CHEBI:57743"/>
        <dbReference type="ChEBI" id="CHEBI:456215"/>
        <dbReference type="EC" id="6.3.4.5"/>
    </reaction>
</comment>
<comment type="pathway">
    <text evidence="1">Amino-acid biosynthesis; L-arginine biosynthesis; L-arginine from L-ornithine and carbamoyl phosphate: step 2/3.</text>
</comment>
<comment type="subunit">
    <text evidence="1">Homotetramer.</text>
</comment>
<comment type="subcellular location">
    <subcellularLocation>
        <location evidence="1">Cytoplasm</location>
    </subcellularLocation>
</comment>
<comment type="similarity">
    <text evidence="1">Belongs to the argininosuccinate synthase family. Type 1 subfamily.</text>
</comment>
<evidence type="ECO:0000255" key="1">
    <source>
        <dbReference type="HAMAP-Rule" id="MF_00005"/>
    </source>
</evidence>
<reference key="1">
    <citation type="submission" date="2008-06" db="EMBL/GenBank/DDBJ databases">
        <title>Complete sequence of Pelodictyon phaeoclathratiforme BU-1.</title>
        <authorList>
            <consortium name="US DOE Joint Genome Institute"/>
            <person name="Lucas S."/>
            <person name="Copeland A."/>
            <person name="Lapidus A."/>
            <person name="Glavina del Rio T."/>
            <person name="Dalin E."/>
            <person name="Tice H."/>
            <person name="Bruce D."/>
            <person name="Goodwin L."/>
            <person name="Pitluck S."/>
            <person name="Schmutz J."/>
            <person name="Larimer F."/>
            <person name="Land M."/>
            <person name="Hauser L."/>
            <person name="Kyrpides N."/>
            <person name="Mikhailova N."/>
            <person name="Liu Z."/>
            <person name="Li T."/>
            <person name="Zhao F."/>
            <person name="Overmann J."/>
            <person name="Bryant D.A."/>
            <person name="Richardson P."/>
        </authorList>
    </citation>
    <scope>NUCLEOTIDE SEQUENCE [LARGE SCALE GENOMIC DNA]</scope>
    <source>
        <strain>DSM 5477 / BU-1</strain>
    </source>
</reference>
<gene>
    <name evidence="1" type="primary">argG</name>
    <name type="ordered locus">Ppha_1378</name>
</gene>
<dbReference type="EC" id="6.3.4.5" evidence="1"/>
<dbReference type="EMBL" id="CP001110">
    <property type="protein sequence ID" value="ACF43641.1"/>
    <property type="molecule type" value="Genomic_DNA"/>
</dbReference>
<dbReference type="RefSeq" id="WP_012508132.1">
    <property type="nucleotide sequence ID" value="NC_011060.1"/>
</dbReference>
<dbReference type="SMR" id="B4S9U5"/>
<dbReference type="STRING" id="324925.Ppha_1378"/>
<dbReference type="KEGG" id="pph:Ppha_1378"/>
<dbReference type="eggNOG" id="COG0137">
    <property type="taxonomic scope" value="Bacteria"/>
</dbReference>
<dbReference type="HOGENOM" id="CLU_032784_4_2_10"/>
<dbReference type="OrthoDB" id="9801641at2"/>
<dbReference type="UniPathway" id="UPA00068">
    <property type="reaction ID" value="UER00113"/>
</dbReference>
<dbReference type="Proteomes" id="UP000002724">
    <property type="component" value="Chromosome"/>
</dbReference>
<dbReference type="GO" id="GO:0005737">
    <property type="term" value="C:cytoplasm"/>
    <property type="evidence" value="ECO:0007669"/>
    <property type="project" value="UniProtKB-SubCell"/>
</dbReference>
<dbReference type="GO" id="GO:0004055">
    <property type="term" value="F:argininosuccinate synthase activity"/>
    <property type="evidence" value="ECO:0007669"/>
    <property type="project" value="UniProtKB-UniRule"/>
</dbReference>
<dbReference type="GO" id="GO:0005524">
    <property type="term" value="F:ATP binding"/>
    <property type="evidence" value="ECO:0007669"/>
    <property type="project" value="UniProtKB-UniRule"/>
</dbReference>
<dbReference type="GO" id="GO:0000053">
    <property type="term" value="P:argininosuccinate metabolic process"/>
    <property type="evidence" value="ECO:0007669"/>
    <property type="project" value="TreeGrafter"/>
</dbReference>
<dbReference type="GO" id="GO:0006526">
    <property type="term" value="P:L-arginine biosynthetic process"/>
    <property type="evidence" value="ECO:0007669"/>
    <property type="project" value="UniProtKB-UniRule"/>
</dbReference>
<dbReference type="GO" id="GO:0000050">
    <property type="term" value="P:urea cycle"/>
    <property type="evidence" value="ECO:0007669"/>
    <property type="project" value="TreeGrafter"/>
</dbReference>
<dbReference type="CDD" id="cd01999">
    <property type="entry name" value="ASS"/>
    <property type="match status" value="1"/>
</dbReference>
<dbReference type="FunFam" id="3.40.50.620:FF:000019">
    <property type="entry name" value="Argininosuccinate synthase"/>
    <property type="match status" value="1"/>
</dbReference>
<dbReference type="FunFam" id="3.90.1260.10:FF:000007">
    <property type="entry name" value="Argininosuccinate synthase"/>
    <property type="match status" value="1"/>
</dbReference>
<dbReference type="Gene3D" id="3.90.1260.10">
    <property type="entry name" value="Argininosuccinate synthetase, chain A, domain 2"/>
    <property type="match status" value="1"/>
</dbReference>
<dbReference type="Gene3D" id="3.40.50.620">
    <property type="entry name" value="HUPs"/>
    <property type="match status" value="1"/>
</dbReference>
<dbReference type="Gene3D" id="1.20.5.470">
    <property type="entry name" value="Single helix bin"/>
    <property type="match status" value="1"/>
</dbReference>
<dbReference type="HAMAP" id="MF_00005">
    <property type="entry name" value="Arg_succ_synth_type1"/>
    <property type="match status" value="1"/>
</dbReference>
<dbReference type="InterPro" id="IPR048268">
    <property type="entry name" value="Arginosuc_syn_C"/>
</dbReference>
<dbReference type="InterPro" id="IPR048267">
    <property type="entry name" value="Arginosuc_syn_N"/>
</dbReference>
<dbReference type="InterPro" id="IPR001518">
    <property type="entry name" value="Arginosuc_synth"/>
</dbReference>
<dbReference type="InterPro" id="IPR018223">
    <property type="entry name" value="Arginosuc_synth_CS"/>
</dbReference>
<dbReference type="InterPro" id="IPR023434">
    <property type="entry name" value="Arginosuc_synth_type_1_subfam"/>
</dbReference>
<dbReference type="InterPro" id="IPR024074">
    <property type="entry name" value="AS_cat/multimer_dom_body"/>
</dbReference>
<dbReference type="InterPro" id="IPR014729">
    <property type="entry name" value="Rossmann-like_a/b/a_fold"/>
</dbReference>
<dbReference type="NCBIfam" id="TIGR00032">
    <property type="entry name" value="argG"/>
    <property type="match status" value="1"/>
</dbReference>
<dbReference type="NCBIfam" id="NF001770">
    <property type="entry name" value="PRK00509.1"/>
    <property type="match status" value="1"/>
</dbReference>
<dbReference type="PANTHER" id="PTHR11587">
    <property type="entry name" value="ARGININOSUCCINATE SYNTHASE"/>
    <property type="match status" value="1"/>
</dbReference>
<dbReference type="PANTHER" id="PTHR11587:SF2">
    <property type="entry name" value="ARGININOSUCCINATE SYNTHASE"/>
    <property type="match status" value="1"/>
</dbReference>
<dbReference type="Pfam" id="PF20979">
    <property type="entry name" value="Arginosuc_syn_C"/>
    <property type="match status" value="1"/>
</dbReference>
<dbReference type="Pfam" id="PF00764">
    <property type="entry name" value="Arginosuc_synth"/>
    <property type="match status" value="1"/>
</dbReference>
<dbReference type="SUPFAM" id="SSF52402">
    <property type="entry name" value="Adenine nucleotide alpha hydrolases-like"/>
    <property type="match status" value="1"/>
</dbReference>
<dbReference type="SUPFAM" id="SSF69864">
    <property type="entry name" value="Argininosuccinate synthetase, C-terminal domain"/>
    <property type="match status" value="1"/>
</dbReference>
<dbReference type="PROSITE" id="PS00564">
    <property type="entry name" value="ARGININOSUCCIN_SYN_1"/>
    <property type="match status" value="1"/>
</dbReference>
<dbReference type="PROSITE" id="PS00565">
    <property type="entry name" value="ARGININOSUCCIN_SYN_2"/>
    <property type="match status" value="1"/>
</dbReference>
<protein>
    <recommendedName>
        <fullName evidence="1">Argininosuccinate synthase</fullName>
        <ecNumber evidence="1">6.3.4.5</ecNumber>
    </recommendedName>
    <alternativeName>
        <fullName evidence="1">Citrulline--aspartate ligase</fullName>
    </alternativeName>
</protein>
<proteinExistence type="inferred from homology"/>
<organism>
    <name type="scientific">Pelodictyon phaeoclathratiforme (strain DSM 5477 / BU-1)</name>
    <dbReference type="NCBI Taxonomy" id="324925"/>
    <lineage>
        <taxon>Bacteria</taxon>
        <taxon>Pseudomonadati</taxon>
        <taxon>Chlorobiota</taxon>
        <taxon>Chlorobiia</taxon>
        <taxon>Chlorobiales</taxon>
        <taxon>Chlorobiaceae</taxon>
        <taxon>Chlorobium/Pelodictyon group</taxon>
        <taxon>Pelodictyon</taxon>
    </lineage>
</organism>
<keyword id="KW-0028">Amino-acid biosynthesis</keyword>
<keyword id="KW-0055">Arginine biosynthesis</keyword>
<keyword id="KW-0067">ATP-binding</keyword>
<keyword id="KW-0963">Cytoplasm</keyword>
<keyword id="KW-0436">Ligase</keyword>
<keyword id="KW-0547">Nucleotide-binding</keyword>
<keyword id="KW-1185">Reference proteome</keyword>